<protein>
    <recommendedName>
        <fullName evidence="1">Methionine--tRNA ligase</fullName>
        <ecNumber evidence="1">6.1.1.10</ecNumber>
    </recommendedName>
    <alternativeName>
        <fullName evidence="1">Methionyl-tRNA synthetase</fullName>
        <shortName evidence="1">MetRS</shortName>
    </alternativeName>
</protein>
<feature type="chain" id="PRO_0000331814" description="Methionine--tRNA ligase">
    <location>
        <begin position="1"/>
        <end position="673"/>
    </location>
</feature>
<feature type="domain" description="tRNA-binding" evidence="1">
    <location>
        <begin position="572"/>
        <end position="673"/>
    </location>
</feature>
<feature type="short sequence motif" description="'HIGH' region">
    <location>
        <begin position="13"/>
        <end position="23"/>
    </location>
</feature>
<feature type="short sequence motif" description="'KMSKS' region">
    <location>
        <begin position="330"/>
        <end position="334"/>
    </location>
</feature>
<feature type="binding site" evidence="1">
    <location>
        <position position="144"/>
    </location>
    <ligand>
        <name>Zn(2+)</name>
        <dbReference type="ChEBI" id="CHEBI:29105"/>
    </ligand>
</feature>
<feature type="binding site" evidence="1">
    <location>
        <position position="147"/>
    </location>
    <ligand>
        <name>Zn(2+)</name>
        <dbReference type="ChEBI" id="CHEBI:29105"/>
    </ligand>
</feature>
<feature type="binding site" evidence="1">
    <location>
        <position position="157"/>
    </location>
    <ligand>
        <name>Zn(2+)</name>
        <dbReference type="ChEBI" id="CHEBI:29105"/>
    </ligand>
</feature>
<feature type="binding site" evidence="1">
    <location>
        <position position="160"/>
    </location>
    <ligand>
        <name>Zn(2+)</name>
        <dbReference type="ChEBI" id="CHEBI:29105"/>
    </ligand>
</feature>
<feature type="binding site" evidence="1">
    <location>
        <position position="333"/>
    </location>
    <ligand>
        <name>ATP</name>
        <dbReference type="ChEBI" id="CHEBI:30616"/>
    </ligand>
</feature>
<organism>
    <name type="scientific">Dichelobacter nodosus (strain VCS1703A)</name>
    <dbReference type="NCBI Taxonomy" id="246195"/>
    <lineage>
        <taxon>Bacteria</taxon>
        <taxon>Pseudomonadati</taxon>
        <taxon>Pseudomonadota</taxon>
        <taxon>Gammaproteobacteria</taxon>
        <taxon>Cardiobacteriales</taxon>
        <taxon>Cardiobacteriaceae</taxon>
        <taxon>Dichelobacter</taxon>
    </lineage>
</organism>
<sequence>MSVRRIFVSSALPYANGSIHLGHMVEHIQTDIWVRFQQLRGHECYYVCADDAHGTAIMLHAEKKGVTPEVLLDEVRAEHISDFQGFLINHHHYHTTHSDENRQLTNEIYQTLKSKGYILKKEISQLFDPEKNIFLPDRFIKGICPKCQAKDQYGDNCEVCGSTYAPTDLIQPYSVLSGATPIMKKSEHFFFDLPQFTDFLKDWLQRADLQPAMRHKLAEWFEAGLQPWDISRDAPYWGFTIPEAKDKYFYVWLDAPVGYLGSFQAFCQQHQHVSFDDFWRDDNKTERYHFIGKDIAYFHMLFWPAMLEGAGLQKPTGVFCHGFLTVNGEKMSKSRGTFIKARTYLKHLRPEYLRYYIASKLSAKVEDIDLNLNDFRQKVNSDLVGKLINLASRSAPFLQRFADNTTVSAFSDSALLEQLRGKSETIARDYEQREFGQAVREVMALADAVNAYVDETKPWILAKETGKAAEIAQIASVVLEAFRLLIIYLKPVLPKVAADAEAFLKLSPQSWQDIEKPMINHEIAAFSPMMQRIEEATLNALIQDSREELKAETKAPVQPSAAPEKSEITIDDFAQLDLRIAKVLACEAVEGSDKLLKFQLDVGDLGKRQVFSGIKRFHQPEELVGQLVVYVANLKPRKMRFGVSEGMILSASDDCDLQILLANGRARAGMTIS</sequence>
<gene>
    <name evidence="1" type="primary">metG</name>
    <name type="ordered locus">DNO_0934</name>
</gene>
<accession>A5EY62</accession>
<keyword id="KW-0030">Aminoacyl-tRNA synthetase</keyword>
<keyword id="KW-0067">ATP-binding</keyword>
<keyword id="KW-0963">Cytoplasm</keyword>
<keyword id="KW-0436">Ligase</keyword>
<keyword id="KW-0479">Metal-binding</keyword>
<keyword id="KW-0547">Nucleotide-binding</keyword>
<keyword id="KW-0648">Protein biosynthesis</keyword>
<keyword id="KW-1185">Reference proteome</keyword>
<keyword id="KW-0694">RNA-binding</keyword>
<keyword id="KW-0820">tRNA-binding</keyword>
<keyword id="KW-0862">Zinc</keyword>
<evidence type="ECO:0000255" key="1">
    <source>
        <dbReference type="HAMAP-Rule" id="MF_00098"/>
    </source>
</evidence>
<dbReference type="EC" id="6.1.1.10" evidence="1"/>
<dbReference type="EMBL" id="CP000513">
    <property type="protein sequence ID" value="ABQ13602.1"/>
    <property type="molecule type" value="Genomic_DNA"/>
</dbReference>
<dbReference type="RefSeq" id="WP_012031250.1">
    <property type="nucleotide sequence ID" value="NC_009446.1"/>
</dbReference>
<dbReference type="SMR" id="A5EY62"/>
<dbReference type="STRING" id="246195.DNO_0934"/>
<dbReference type="KEGG" id="dno:DNO_0934"/>
<dbReference type="eggNOG" id="COG0073">
    <property type="taxonomic scope" value="Bacteria"/>
</dbReference>
<dbReference type="eggNOG" id="COG0143">
    <property type="taxonomic scope" value="Bacteria"/>
</dbReference>
<dbReference type="HOGENOM" id="CLU_009710_7_0_6"/>
<dbReference type="OrthoDB" id="9810191at2"/>
<dbReference type="Proteomes" id="UP000000248">
    <property type="component" value="Chromosome"/>
</dbReference>
<dbReference type="GO" id="GO:0005829">
    <property type="term" value="C:cytosol"/>
    <property type="evidence" value="ECO:0007669"/>
    <property type="project" value="TreeGrafter"/>
</dbReference>
<dbReference type="GO" id="GO:0005524">
    <property type="term" value="F:ATP binding"/>
    <property type="evidence" value="ECO:0007669"/>
    <property type="project" value="UniProtKB-UniRule"/>
</dbReference>
<dbReference type="GO" id="GO:0046872">
    <property type="term" value="F:metal ion binding"/>
    <property type="evidence" value="ECO:0007669"/>
    <property type="project" value="UniProtKB-KW"/>
</dbReference>
<dbReference type="GO" id="GO:0004825">
    <property type="term" value="F:methionine-tRNA ligase activity"/>
    <property type="evidence" value="ECO:0007669"/>
    <property type="project" value="UniProtKB-UniRule"/>
</dbReference>
<dbReference type="GO" id="GO:0000049">
    <property type="term" value="F:tRNA binding"/>
    <property type="evidence" value="ECO:0007669"/>
    <property type="project" value="UniProtKB-KW"/>
</dbReference>
<dbReference type="GO" id="GO:0006431">
    <property type="term" value="P:methionyl-tRNA aminoacylation"/>
    <property type="evidence" value="ECO:0007669"/>
    <property type="project" value="UniProtKB-UniRule"/>
</dbReference>
<dbReference type="CDD" id="cd07957">
    <property type="entry name" value="Anticodon_Ia_Met"/>
    <property type="match status" value="1"/>
</dbReference>
<dbReference type="CDD" id="cd00814">
    <property type="entry name" value="MetRS_core"/>
    <property type="match status" value="1"/>
</dbReference>
<dbReference type="CDD" id="cd02800">
    <property type="entry name" value="tRNA_bind_EcMetRS_like"/>
    <property type="match status" value="1"/>
</dbReference>
<dbReference type="FunFam" id="2.20.28.20:FF:000001">
    <property type="entry name" value="Methionine--tRNA ligase"/>
    <property type="match status" value="1"/>
</dbReference>
<dbReference type="FunFam" id="2.40.50.140:FF:000042">
    <property type="entry name" value="Methionine--tRNA ligase"/>
    <property type="match status" value="1"/>
</dbReference>
<dbReference type="Gene3D" id="3.40.50.620">
    <property type="entry name" value="HUPs"/>
    <property type="match status" value="1"/>
</dbReference>
<dbReference type="Gene3D" id="1.10.730.10">
    <property type="entry name" value="Isoleucyl-tRNA Synthetase, Domain 1"/>
    <property type="match status" value="1"/>
</dbReference>
<dbReference type="Gene3D" id="2.20.28.20">
    <property type="entry name" value="Methionyl-tRNA synthetase, Zn-domain"/>
    <property type="match status" value="1"/>
</dbReference>
<dbReference type="Gene3D" id="2.40.50.140">
    <property type="entry name" value="Nucleic acid-binding proteins"/>
    <property type="match status" value="1"/>
</dbReference>
<dbReference type="HAMAP" id="MF_00098">
    <property type="entry name" value="Met_tRNA_synth_type1"/>
    <property type="match status" value="1"/>
</dbReference>
<dbReference type="InterPro" id="IPR001412">
    <property type="entry name" value="aa-tRNA-synth_I_CS"/>
</dbReference>
<dbReference type="InterPro" id="IPR041872">
    <property type="entry name" value="Anticodon_Met"/>
</dbReference>
<dbReference type="InterPro" id="IPR004495">
    <property type="entry name" value="Met-tRNA-synth_bsu_C"/>
</dbReference>
<dbReference type="InterPro" id="IPR023458">
    <property type="entry name" value="Met-tRNA_ligase_1"/>
</dbReference>
<dbReference type="InterPro" id="IPR014758">
    <property type="entry name" value="Met-tRNA_synth"/>
</dbReference>
<dbReference type="InterPro" id="IPR015413">
    <property type="entry name" value="Methionyl/Leucyl_tRNA_Synth"/>
</dbReference>
<dbReference type="InterPro" id="IPR033911">
    <property type="entry name" value="MetRS_core"/>
</dbReference>
<dbReference type="InterPro" id="IPR029038">
    <property type="entry name" value="MetRS_Zn"/>
</dbReference>
<dbReference type="InterPro" id="IPR012340">
    <property type="entry name" value="NA-bd_OB-fold"/>
</dbReference>
<dbReference type="InterPro" id="IPR014729">
    <property type="entry name" value="Rossmann-like_a/b/a_fold"/>
</dbReference>
<dbReference type="InterPro" id="IPR002547">
    <property type="entry name" value="tRNA-bd_dom"/>
</dbReference>
<dbReference type="InterPro" id="IPR009080">
    <property type="entry name" value="tRNAsynth_Ia_anticodon-bd"/>
</dbReference>
<dbReference type="NCBIfam" id="TIGR00398">
    <property type="entry name" value="metG"/>
    <property type="match status" value="1"/>
</dbReference>
<dbReference type="NCBIfam" id="TIGR00399">
    <property type="entry name" value="metG_C_term"/>
    <property type="match status" value="1"/>
</dbReference>
<dbReference type="NCBIfam" id="NF001100">
    <property type="entry name" value="PRK00133.1"/>
    <property type="match status" value="1"/>
</dbReference>
<dbReference type="PANTHER" id="PTHR45765">
    <property type="entry name" value="METHIONINE--TRNA LIGASE"/>
    <property type="match status" value="1"/>
</dbReference>
<dbReference type="PANTHER" id="PTHR45765:SF1">
    <property type="entry name" value="METHIONINE--TRNA LIGASE, CYTOPLASMIC"/>
    <property type="match status" value="1"/>
</dbReference>
<dbReference type="Pfam" id="PF19303">
    <property type="entry name" value="Anticodon_3"/>
    <property type="match status" value="1"/>
</dbReference>
<dbReference type="Pfam" id="PF09334">
    <property type="entry name" value="tRNA-synt_1g"/>
    <property type="match status" value="1"/>
</dbReference>
<dbReference type="Pfam" id="PF01588">
    <property type="entry name" value="tRNA_bind"/>
    <property type="match status" value="1"/>
</dbReference>
<dbReference type="PRINTS" id="PR01041">
    <property type="entry name" value="TRNASYNTHMET"/>
</dbReference>
<dbReference type="SUPFAM" id="SSF47323">
    <property type="entry name" value="Anticodon-binding domain of a subclass of class I aminoacyl-tRNA synthetases"/>
    <property type="match status" value="1"/>
</dbReference>
<dbReference type="SUPFAM" id="SSF57770">
    <property type="entry name" value="Methionyl-tRNA synthetase (MetRS), Zn-domain"/>
    <property type="match status" value="1"/>
</dbReference>
<dbReference type="SUPFAM" id="SSF50249">
    <property type="entry name" value="Nucleic acid-binding proteins"/>
    <property type="match status" value="1"/>
</dbReference>
<dbReference type="SUPFAM" id="SSF52374">
    <property type="entry name" value="Nucleotidylyl transferase"/>
    <property type="match status" value="1"/>
</dbReference>
<dbReference type="PROSITE" id="PS00178">
    <property type="entry name" value="AA_TRNA_LIGASE_I"/>
    <property type="match status" value="1"/>
</dbReference>
<dbReference type="PROSITE" id="PS50886">
    <property type="entry name" value="TRBD"/>
    <property type="match status" value="1"/>
</dbReference>
<name>SYM_DICNV</name>
<reference key="1">
    <citation type="journal article" date="2007" name="Nat. Biotechnol.">
        <title>Genome sequence and identification of candidate vaccine antigens from the animal pathogen Dichelobacter nodosus.</title>
        <authorList>
            <person name="Myers G.S.A."/>
            <person name="Parker D."/>
            <person name="Al-Hasani K."/>
            <person name="Kennan R.M."/>
            <person name="Seemann T."/>
            <person name="Ren Q."/>
            <person name="Badger J.H."/>
            <person name="Selengut J.D."/>
            <person name="Deboy R.T."/>
            <person name="Tettelin H."/>
            <person name="Boyce J.D."/>
            <person name="McCarl V.P."/>
            <person name="Han X."/>
            <person name="Nelson W.C."/>
            <person name="Madupu R."/>
            <person name="Mohamoud Y."/>
            <person name="Holley T."/>
            <person name="Fedorova N."/>
            <person name="Khouri H."/>
            <person name="Bottomley S.P."/>
            <person name="Whittington R.J."/>
            <person name="Adler B."/>
            <person name="Songer J.G."/>
            <person name="Rood J.I."/>
            <person name="Paulsen I.T."/>
        </authorList>
    </citation>
    <scope>NUCLEOTIDE SEQUENCE [LARGE SCALE GENOMIC DNA]</scope>
    <source>
        <strain>VCS1703A</strain>
    </source>
</reference>
<comment type="function">
    <text evidence="1">Is required not only for elongation of protein synthesis but also for the initiation of all mRNA translation through initiator tRNA(fMet) aminoacylation.</text>
</comment>
<comment type="catalytic activity">
    <reaction evidence="1">
        <text>tRNA(Met) + L-methionine + ATP = L-methionyl-tRNA(Met) + AMP + diphosphate</text>
        <dbReference type="Rhea" id="RHEA:13481"/>
        <dbReference type="Rhea" id="RHEA-COMP:9667"/>
        <dbReference type="Rhea" id="RHEA-COMP:9698"/>
        <dbReference type="ChEBI" id="CHEBI:30616"/>
        <dbReference type="ChEBI" id="CHEBI:33019"/>
        <dbReference type="ChEBI" id="CHEBI:57844"/>
        <dbReference type="ChEBI" id="CHEBI:78442"/>
        <dbReference type="ChEBI" id="CHEBI:78530"/>
        <dbReference type="ChEBI" id="CHEBI:456215"/>
        <dbReference type="EC" id="6.1.1.10"/>
    </reaction>
</comment>
<comment type="cofactor">
    <cofactor evidence="1">
        <name>Zn(2+)</name>
        <dbReference type="ChEBI" id="CHEBI:29105"/>
    </cofactor>
    <text evidence="1">Binds 1 zinc ion per subunit.</text>
</comment>
<comment type="subunit">
    <text evidence="1">Homodimer.</text>
</comment>
<comment type="subcellular location">
    <subcellularLocation>
        <location evidence="1">Cytoplasm</location>
    </subcellularLocation>
</comment>
<comment type="similarity">
    <text evidence="1">Belongs to the class-I aminoacyl-tRNA synthetase family. MetG type 1 subfamily.</text>
</comment>
<proteinExistence type="inferred from homology"/>